<protein>
    <recommendedName>
        <fullName evidence="1">Homoserine O-succinyltransferase</fullName>
        <shortName evidence="1">HST</shortName>
        <ecNumber evidence="1">2.3.1.46</ecNumber>
    </recommendedName>
    <alternativeName>
        <fullName evidence="1">Homoserine transsuccinylase</fullName>
        <shortName evidence="1">HTS</shortName>
    </alternativeName>
</protein>
<name>METXS_AZOSB</name>
<organism>
    <name type="scientific">Azoarcus sp. (strain BH72)</name>
    <dbReference type="NCBI Taxonomy" id="418699"/>
    <lineage>
        <taxon>Bacteria</taxon>
        <taxon>Pseudomonadati</taxon>
        <taxon>Pseudomonadota</taxon>
        <taxon>Betaproteobacteria</taxon>
        <taxon>Rhodocyclales</taxon>
        <taxon>Zoogloeaceae</taxon>
        <taxon>Azoarcus</taxon>
    </lineage>
</organism>
<feature type="chain" id="PRO_1000021865" description="Homoserine O-succinyltransferase">
    <location>
        <begin position="1"/>
        <end position="375"/>
    </location>
</feature>
<feature type="domain" description="AB hydrolase-1" evidence="1">
    <location>
        <begin position="48"/>
        <end position="358"/>
    </location>
</feature>
<feature type="active site" description="Nucleophile" evidence="1">
    <location>
        <position position="154"/>
    </location>
</feature>
<feature type="active site" evidence="1">
    <location>
        <position position="319"/>
    </location>
</feature>
<feature type="active site" evidence="1">
    <location>
        <position position="352"/>
    </location>
</feature>
<feature type="binding site" evidence="1">
    <location>
        <position position="224"/>
    </location>
    <ligand>
        <name>substrate</name>
    </ligand>
</feature>
<feature type="binding site" evidence="1">
    <location>
        <position position="353"/>
    </location>
    <ligand>
        <name>substrate</name>
    </ligand>
</feature>
<feature type="site" description="Important for acyl-CoA specificity" evidence="1">
    <location>
        <position position="321"/>
    </location>
</feature>
<proteinExistence type="inferred from homology"/>
<sequence>MTEPQSVGTVAPQTAHFDEPLPLRSGGTLAGYDLVYETYGQLNAARSNAVLVCHALSGSHHVAGVYADDPRNVGWWDNLVGPGKPLDTRKFFVIGVNNLGGCYGSTGPGSVNPATGRPWGADFPFVTVEDWVDAQARLADRLGIQRFAAIVGGSLGGMQALSWTLQYPERVGHAAVIASAPKLTAQNIAFNEVARQAILTDPDFHGGHYYEHGVVPARGLKLARMVGHITYLSDDSMGEKFGRSLRHGKAVYSYDVEFEIESYLRYQGDKFAGYFDANTYLLTTKTLDYFDPAFEHGGNLNAALARASADFLVVSFTTDWRFSPARSREIVYALLHNRRNVSYAEIDCPAGHDSFLLDDPQYHALLSAWFDRIEV</sequence>
<evidence type="ECO:0000255" key="1">
    <source>
        <dbReference type="HAMAP-Rule" id="MF_00296"/>
    </source>
</evidence>
<gene>
    <name evidence="1" type="primary">metXS</name>
    <name type="ordered locus">azo3971</name>
</gene>
<dbReference type="EC" id="2.3.1.46" evidence="1"/>
<dbReference type="EMBL" id="AM406670">
    <property type="protein sequence ID" value="CAL96587.1"/>
    <property type="molecule type" value="Genomic_DNA"/>
</dbReference>
<dbReference type="RefSeq" id="WP_011767693.1">
    <property type="nucleotide sequence ID" value="NC_008702.1"/>
</dbReference>
<dbReference type="SMR" id="A1KCN1"/>
<dbReference type="STRING" id="62928.azo3971"/>
<dbReference type="ESTHER" id="azosb-metx">
    <property type="family name" value="Homoserine_transacetylase"/>
</dbReference>
<dbReference type="KEGG" id="aoa:dqs_4114"/>
<dbReference type="KEGG" id="azo:azo3971"/>
<dbReference type="eggNOG" id="COG2021">
    <property type="taxonomic scope" value="Bacteria"/>
</dbReference>
<dbReference type="HOGENOM" id="CLU_028760_1_2_4"/>
<dbReference type="OrthoDB" id="9800754at2"/>
<dbReference type="UniPathway" id="UPA00051">
    <property type="reaction ID" value="UER00075"/>
</dbReference>
<dbReference type="Proteomes" id="UP000002588">
    <property type="component" value="Chromosome"/>
</dbReference>
<dbReference type="GO" id="GO:0005737">
    <property type="term" value="C:cytoplasm"/>
    <property type="evidence" value="ECO:0007669"/>
    <property type="project" value="UniProtKB-SubCell"/>
</dbReference>
<dbReference type="GO" id="GO:0004414">
    <property type="term" value="F:homoserine O-acetyltransferase activity"/>
    <property type="evidence" value="ECO:0007669"/>
    <property type="project" value="TreeGrafter"/>
</dbReference>
<dbReference type="GO" id="GO:0008899">
    <property type="term" value="F:homoserine O-succinyltransferase activity"/>
    <property type="evidence" value="ECO:0007669"/>
    <property type="project" value="UniProtKB-UniRule"/>
</dbReference>
<dbReference type="GO" id="GO:0009092">
    <property type="term" value="P:homoserine metabolic process"/>
    <property type="evidence" value="ECO:0007669"/>
    <property type="project" value="TreeGrafter"/>
</dbReference>
<dbReference type="GO" id="GO:0009086">
    <property type="term" value="P:methionine biosynthetic process"/>
    <property type="evidence" value="ECO:0007669"/>
    <property type="project" value="UniProtKB-UniRule"/>
</dbReference>
<dbReference type="FunFam" id="1.10.1740.110:FF:000001">
    <property type="entry name" value="Homoserine O-acetyltransferase"/>
    <property type="match status" value="1"/>
</dbReference>
<dbReference type="Gene3D" id="1.10.1740.110">
    <property type="match status" value="1"/>
</dbReference>
<dbReference type="Gene3D" id="3.40.50.1820">
    <property type="entry name" value="alpha/beta hydrolase"/>
    <property type="match status" value="1"/>
</dbReference>
<dbReference type="HAMAP" id="MF_00296">
    <property type="entry name" value="MetX_acyltransf"/>
    <property type="match status" value="1"/>
</dbReference>
<dbReference type="InterPro" id="IPR000073">
    <property type="entry name" value="AB_hydrolase_1"/>
</dbReference>
<dbReference type="InterPro" id="IPR029058">
    <property type="entry name" value="AB_hydrolase_fold"/>
</dbReference>
<dbReference type="InterPro" id="IPR008220">
    <property type="entry name" value="HAT_MetX-like"/>
</dbReference>
<dbReference type="NCBIfam" id="TIGR01392">
    <property type="entry name" value="homoserO_Ac_trn"/>
    <property type="match status" value="1"/>
</dbReference>
<dbReference type="NCBIfam" id="NF001209">
    <property type="entry name" value="PRK00175.1"/>
    <property type="match status" value="1"/>
</dbReference>
<dbReference type="PANTHER" id="PTHR32268">
    <property type="entry name" value="HOMOSERINE O-ACETYLTRANSFERASE"/>
    <property type="match status" value="1"/>
</dbReference>
<dbReference type="PANTHER" id="PTHR32268:SF11">
    <property type="entry name" value="HOMOSERINE O-ACETYLTRANSFERASE"/>
    <property type="match status" value="1"/>
</dbReference>
<dbReference type="Pfam" id="PF00561">
    <property type="entry name" value="Abhydrolase_1"/>
    <property type="match status" value="1"/>
</dbReference>
<dbReference type="PIRSF" id="PIRSF000443">
    <property type="entry name" value="Homoser_Ac_trans"/>
    <property type="match status" value="1"/>
</dbReference>
<dbReference type="SUPFAM" id="SSF53474">
    <property type="entry name" value="alpha/beta-Hydrolases"/>
    <property type="match status" value="1"/>
</dbReference>
<comment type="function">
    <text evidence="1">Transfers a succinyl group from succinyl-CoA to L-homoserine, forming succinyl-L-homoserine.</text>
</comment>
<comment type="catalytic activity">
    <reaction evidence="1">
        <text>L-homoserine + succinyl-CoA = O-succinyl-L-homoserine + CoA</text>
        <dbReference type="Rhea" id="RHEA:22008"/>
        <dbReference type="ChEBI" id="CHEBI:57287"/>
        <dbReference type="ChEBI" id="CHEBI:57292"/>
        <dbReference type="ChEBI" id="CHEBI:57476"/>
        <dbReference type="ChEBI" id="CHEBI:57661"/>
        <dbReference type="EC" id="2.3.1.46"/>
    </reaction>
</comment>
<comment type="pathway">
    <text evidence="1">Amino-acid biosynthesis; L-methionine biosynthesis via de novo pathway; O-succinyl-L-homoserine from L-homoserine: step 1/1.</text>
</comment>
<comment type="subunit">
    <text evidence="1">Homodimer.</text>
</comment>
<comment type="subcellular location">
    <subcellularLocation>
        <location evidence="1">Cytoplasm</location>
    </subcellularLocation>
</comment>
<comment type="similarity">
    <text evidence="1">Belongs to the AB hydrolase superfamily. MetX family.</text>
</comment>
<keyword id="KW-0012">Acyltransferase</keyword>
<keyword id="KW-0028">Amino-acid biosynthesis</keyword>
<keyword id="KW-0963">Cytoplasm</keyword>
<keyword id="KW-0486">Methionine biosynthesis</keyword>
<keyword id="KW-1185">Reference proteome</keyword>
<keyword id="KW-0808">Transferase</keyword>
<accession>A1KCN1</accession>
<reference key="1">
    <citation type="journal article" date="2006" name="Nat. Biotechnol.">
        <title>Complete genome of the mutualistic, N2-fixing grass endophyte Azoarcus sp. strain BH72.</title>
        <authorList>
            <person name="Krause A."/>
            <person name="Ramakumar A."/>
            <person name="Bartels D."/>
            <person name="Battistoni F."/>
            <person name="Bekel T."/>
            <person name="Boch J."/>
            <person name="Boehm M."/>
            <person name="Friedrich F."/>
            <person name="Hurek T."/>
            <person name="Krause L."/>
            <person name="Linke B."/>
            <person name="McHardy A.C."/>
            <person name="Sarkar A."/>
            <person name="Schneiker S."/>
            <person name="Syed A.A."/>
            <person name="Thauer R."/>
            <person name="Vorhoelter F.-J."/>
            <person name="Weidner S."/>
            <person name="Puehler A."/>
            <person name="Reinhold-Hurek B."/>
            <person name="Kaiser O."/>
            <person name="Goesmann A."/>
        </authorList>
    </citation>
    <scope>NUCLEOTIDE SEQUENCE [LARGE SCALE GENOMIC DNA]</scope>
    <source>
        <strain>BH72</strain>
    </source>
</reference>